<proteinExistence type="inferred from homology"/>
<feature type="chain" id="PRO_1000164613" description="Alanine racemase">
    <location>
        <begin position="1"/>
        <end position="363"/>
    </location>
</feature>
<feature type="active site" description="Proton acceptor; specific for D-alanine" evidence="1">
    <location>
        <position position="35"/>
    </location>
</feature>
<feature type="active site" description="Proton acceptor; specific for L-alanine" evidence="1">
    <location>
        <position position="259"/>
    </location>
</feature>
<feature type="binding site" evidence="1">
    <location>
        <position position="134"/>
    </location>
    <ligand>
        <name>substrate</name>
    </ligand>
</feature>
<feature type="binding site" evidence="1">
    <location>
        <position position="307"/>
    </location>
    <ligand>
        <name>substrate</name>
    </ligand>
</feature>
<feature type="modified residue" description="N6-(pyridoxal phosphate)lysine" evidence="1">
    <location>
        <position position="35"/>
    </location>
</feature>
<evidence type="ECO:0000255" key="1">
    <source>
        <dbReference type="HAMAP-Rule" id="MF_01201"/>
    </source>
</evidence>
<protein>
    <recommendedName>
        <fullName evidence="1">Alanine racemase</fullName>
        <ecNumber evidence="1">5.1.1.1</ecNumber>
    </recommendedName>
</protein>
<keyword id="KW-0413">Isomerase</keyword>
<keyword id="KW-0663">Pyridoxal phosphate</keyword>
<keyword id="KW-1185">Reference proteome</keyword>
<dbReference type="EC" id="5.1.1.1" evidence="1"/>
<dbReference type="EMBL" id="CP000302">
    <property type="protein sequence ID" value="ABE53814.1"/>
    <property type="molecule type" value="Genomic_DNA"/>
</dbReference>
<dbReference type="RefSeq" id="WP_011494980.1">
    <property type="nucleotide sequence ID" value="NC_007954.1"/>
</dbReference>
<dbReference type="SMR" id="Q12RW2"/>
<dbReference type="STRING" id="318161.Sden_0522"/>
<dbReference type="KEGG" id="sdn:Sden_0522"/>
<dbReference type="eggNOG" id="COG0787">
    <property type="taxonomic scope" value="Bacteria"/>
</dbReference>
<dbReference type="HOGENOM" id="CLU_028393_1_0_6"/>
<dbReference type="OrthoDB" id="9813814at2"/>
<dbReference type="UniPathway" id="UPA00042">
    <property type="reaction ID" value="UER00497"/>
</dbReference>
<dbReference type="Proteomes" id="UP000001982">
    <property type="component" value="Chromosome"/>
</dbReference>
<dbReference type="GO" id="GO:0005829">
    <property type="term" value="C:cytosol"/>
    <property type="evidence" value="ECO:0007669"/>
    <property type="project" value="TreeGrafter"/>
</dbReference>
<dbReference type="GO" id="GO:0008784">
    <property type="term" value="F:alanine racemase activity"/>
    <property type="evidence" value="ECO:0007669"/>
    <property type="project" value="UniProtKB-UniRule"/>
</dbReference>
<dbReference type="GO" id="GO:0030170">
    <property type="term" value="F:pyridoxal phosphate binding"/>
    <property type="evidence" value="ECO:0007669"/>
    <property type="project" value="UniProtKB-UniRule"/>
</dbReference>
<dbReference type="GO" id="GO:0030632">
    <property type="term" value="P:D-alanine biosynthetic process"/>
    <property type="evidence" value="ECO:0007669"/>
    <property type="project" value="UniProtKB-UniRule"/>
</dbReference>
<dbReference type="CDD" id="cd06827">
    <property type="entry name" value="PLPDE_III_AR_proteobact"/>
    <property type="match status" value="1"/>
</dbReference>
<dbReference type="FunFam" id="2.40.37.10:FF:000002">
    <property type="entry name" value="Alanine racemase"/>
    <property type="match status" value="1"/>
</dbReference>
<dbReference type="FunFam" id="3.20.20.10:FF:000002">
    <property type="entry name" value="Alanine racemase"/>
    <property type="match status" value="1"/>
</dbReference>
<dbReference type="Gene3D" id="3.20.20.10">
    <property type="entry name" value="Alanine racemase"/>
    <property type="match status" value="1"/>
</dbReference>
<dbReference type="Gene3D" id="2.40.37.10">
    <property type="entry name" value="Lyase, Ornithine Decarboxylase, Chain A, domain 1"/>
    <property type="match status" value="1"/>
</dbReference>
<dbReference type="HAMAP" id="MF_01201">
    <property type="entry name" value="Ala_racemase"/>
    <property type="match status" value="1"/>
</dbReference>
<dbReference type="InterPro" id="IPR000821">
    <property type="entry name" value="Ala_racemase"/>
</dbReference>
<dbReference type="InterPro" id="IPR009006">
    <property type="entry name" value="Ala_racemase/Decarboxylase_C"/>
</dbReference>
<dbReference type="InterPro" id="IPR011079">
    <property type="entry name" value="Ala_racemase_C"/>
</dbReference>
<dbReference type="InterPro" id="IPR001608">
    <property type="entry name" value="Ala_racemase_N"/>
</dbReference>
<dbReference type="InterPro" id="IPR020622">
    <property type="entry name" value="Ala_racemase_pyridoxalP-BS"/>
</dbReference>
<dbReference type="InterPro" id="IPR029066">
    <property type="entry name" value="PLP-binding_barrel"/>
</dbReference>
<dbReference type="NCBIfam" id="TIGR00492">
    <property type="entry name" value="alr"/>
    <property type="match status" value="1"/>
</dbReference>
<dbReference type="PANTHER" id="PTHR30511">
    <property type="entry name" value="ALANINE RACEMASE"/>
    <property type="match status" value="1"/>
</dbReference>
<dbReference type="PANTHER" id="PTHR30511:SF4">
    <property type="entry name" value="ALANINE RACEMASE, BIOSYNTHETIC"/>
    <property type="match status" value="1"/>
</dbReference>
<dbReference type="Pfam" id="PF00842">
    <property type="entry name" value="Ala_racemase_C"/>
    <property type="match status" value="1"/>
</dbReference>
<dbReference type="Pfam" id="PF01168">
    <property type="entry name" value="Ala_racemase_N"/>
    <property type="match status" value="1"/>
</dbReference>
<dbReference type="PRINTS" id="PR00992">
    <property type="entry name" value="ALARACEMASE"/>
</dbReference>
<dbReference type="SMART" id="SM01005">
    <property type="entry name" value="Ala_racemase_C"/>
    <property type="match status" value="1"/>
</dbReference>
<dbReference type="SUPFAM" id="SSF50621">
    <property type="entry name" value="Alanine racemase C-terminal domain-like"/>
    <property type="match status" value="1"/>
</dbReference>
<dbReference type="SUPFAM" id="SSF51419">
    <property type="entry name" value="PLP-binding barrel"/>
    <property type="match status" value="1"/>
</dbReference>
<dbReference type="PROSITE" id="PS00395">
    <property type="entry name" value="ALANINE_RACEMASE"/>
    <property type="match status" value="1"/>
</dbReference>
<accession>Q12RW2</accession>
<sequence length="363" mass="39562">MKPFPRAEISRKALQANLARIRELAPQSKIMAVVKANGYGHGLLNVANSVATYDQGADGFGLARLEEALELRSGGVNARLLLLEGFFRVTDLPLLVQHHIDTVVHHESQVEMLEQAELTTPVTVWMKIDTGMHRLGFSLAQFDAIYQRLLACHNIAKPIHLMTHFACSDEPDNSFTQAQIDAFESVTASLDGDRSLANSGGMLFWPQSQRDWIRAGIALYGVSPMVGDKGGNHGLVPAMELKSQLISVKDHQAGDSVGYGAFWRARKDTRIGVVAIGYGDGYPRHAPEGTPVWLNGRRVPIVGRVSMDMLTVDLGLDSQDKVGDEVLLWGSALAVEEVADHIGTIAYELVTKLTPRVAVALLP</sequence>
<gene>
    <name type="primary">alr</name>
    <name type="ordered locus">Sden_0522</name>
</gene>
<organism>
    <name type="scientific">Shewanella denitrificans (strain OS217 / ATCC BAA-1090 / DSM 15013)</name>
    <dbReference type="NCBI Taxonomy" id="318161"/>
    <lineage>
        <taxon>Bacteria</taxon>
        <taxon>Pseudomonadati</taxon>
        <taxon>Pseudomonadota</taxon>
        <taxon>Gammaproteobacteria</taxon>
        <taxon>Alteromonadales</taxon>
        <taxon>Shewanellaceae</taxon>
        <taxon>Shewanella</taxon>
    </lineage>
</organism>
<name>ALR_SHEDO</name>
<comment type="function">
    <text evidence="1">Catalyzes the interconversion of L-alanine and D-alanine. May also act on other amino acids.</text>
</comment>
<comment type="catalytic activity">
    <reaction evidence="1">
        <text>L-alanine = D-alanine</text>
        <dbReference type="Rhea" id="RHEA:20249"/>
        <dbReference type="ChEBI" id="CHEBI:57416"/>
        <dbReference type="ChEBI" id="CHEBI:57972"/>
        <dbReference type="EC" id="5.1.1.1"/>
    </reaction>
</comment>
<comment type="cofactor">
    <cofactor evidence="1">
        <name>pyridoxal 5'-phosphate</name>
        <dbReference type="ChEBI" id="CHEBI:597326"/>
    </cofactor>
</comment>
<comment type="pathway">
    <text evidence="1">Amino-acid biosynthesis; D-alanine biosynthesis; D-alanine from L-alanine: step 1/1.</text>
</comment>
<comment type="similarity">
    <text evidence="1">Belongs to the alanine racemase family.</text>
</comment>
<reference key="1">
    <citation type="submission" date="2006-03" db="EMBL/GenBank/DDBJ databases">
        <title>Complete sequence of Shewanella denitrificans OS217.</title>
        <authorList>
            <consortium name="US DOE Joint Genome Institute"/>
            <person name="Copeland A."/>
            <person name="Lucas S."/>
            <person name="Lapidus A."/>
            <person name="Barry K."/>
            <person name="Detter J.C."/>
            <person name="Glavina del Rio T."/>
            <person name="Hammon N."/>
            <person name="Israni S."/>
            <person name="Dalin E."/>
            <person name="Tice H."/>
            <person name="Pitluck S."/>
            <person name="Brettin T."/>
            <person name="Bruce D."/>
            <person name="Han C."/>
            <person name="Tapia R."/>
            <person name="Gilna P."/>
            <person name="Kiss H."/>
            <person name="Schmutz J."/>
            <person name="Larimer F."/>
            <person name="Land M."/>
            <person name="Hauser L."/>
            <person name="Kyrpides N."/>
            <person name="Lykidis A."/>
            <person name="Richardson P."/>
        </authorList>
    </citation>
    <scope>NUCLEOTIDE SEQUENCE [LARGE SCALE GENOMIC DNA]</scope>
    <source>
        <strain>OS217 / ATCC BAA-1090 / DSM 15013</strain>
    </source>
</reference>